<organism>
    <name type="scientific">Bacillus thuringiensis (strain Al Hakam)</name>
    <dbReference type="NCBI Taxonomy" id="412694"/>
    <lineage>
        <taxon>Bacteria</taxon>
        <taxon>Bacillati</taxon>
        <taxon>Bacillota</taxon>
        <taxon>Bacilli</taxon>
        <taxon>Bacillales</taxon>
        <taxon>Bacillaceae</taxon>
        <taxon>Bacillus</taxon>
        <taxon>Bacillus cereus group</taxon>
    </lineage>
</organism>
<protein>
    <recommendedName>
        <fullName evidence="1">Proline--tRNA ligase 2</fullName>
        <ecNumber evidence="1">6.1.1.15</ecNumber>
    </recommendedName>
    <alternativeName>
        <fullName evidence="1">Prolyl-tRNA synthetase 2</fullName>
        <shortName evidence="1">ProRS 2</shortName>
    </alternativeName>
</protein>
<dbReference type="EC" id="6.1.1.15" evidence="1"/>
<dbReference type="EMBL" id="CP000485">
    <property type="protein sequence ID" value="ABK83793.1"/>
    <property type="status" value="ALT_INIT"/>
    <property type="molecule type" value="Genomic_DNA"/>
</dbReference>
<dbReference type="SMR" id="A0R9A0"/>
<dbReference type="KEGG" id="btl:BALH_0396"/>
<dbReference type="HOGENOM" id="CLU_001882_4_2_9"/>
<dbReference type="GO" id="GO:0017101">
    <property type="term" value="C:aminoacyl-tRNA synthetase multienzyme complex"/>
    <property type="evidence" value="ECO:0007669"/>
    <property type="project" value="TreeGrafter"/>
</dbReference>
<dbReference type="GO" id="GO:0005737">
    <property type="term" value="C:cytoplasm"/>
    <property type="evidence" value="ECO:0007669"/>
    <property type="project" value="UniProtKB-SubCell"/>
</dbReference>
<dbReference type="GO" id="GO:0005524">
    <property type="term" value="F:ATP binding"/>
    <property type="evidence" value="ECO:0007669"/>
    <property type="project" value="UniProtKB-UniRule"/>
</dbReference>
<dbReference type="GO" id="GO:0140096">
    <property type="term" value="F:catalytic activity, acting on a protein"/>
    <property type="evidence" value="ECO:0007669"/>
    <property type="project" value="UniProtKB-ARBA"/>
</dbReference>
<dbReference type="GO" id="GO:0004827">
    <property type="term" value="F:proline-tRNA ligase activity"/>
    <property type="evidence" value="ECO:0007669"/>
    <property type="project" value="UniProtKB-UniRule"/>
</dbReference>
<dbReference type="GO" id="GO:0016740">
    <property type="term" value="F:transferase activity"/>
    <property type="evidence" value="ECO:0007669"/>
    <property type="project" value="UniProtKB-ARBA"/>
</dbReference>
<dbReference type="GO" id="GO:0006433">
    <property type="term" value="P:prolyl-tRNA aminoacylation"/>
    <property type="evidence" value="ECO:0007669"/>
    <property type="project" value="UniProtKB-UniRule"/>
</dbReference>
<dbReference type="CDD" id="cd00862">
    <property type="entry name" value="ProRS_anticodon_zinc"/>
    <property type="match status" value="1"/>
</dbReference>
<dbReference type="CDD" id="cd00778">
    <property type="entry name" value="ProRS_core_arch_euk"/>
    <property type="match status" value="1"/>
</dbReference>
<dbReference type="FunFam" id="3.40.50.800:FF:000005">
    <property type="entry name" value="bifunctional glutamate/proline--tRNA ligase"/>
    <property type="match status" value="1"/>
</dbReference>
<dbReference type="FunFam" id="3.30.110.30:FF:000005">
    <property type="entry name" value="Proline--tRNA ligase"/>
    <property type="match status" value="1"/>
</dbReference>
<dbReference type="FunFam" id="3.30.930.10:FF:000023">
    <property type="entry name" value="Proline--tRNA ligase"/>
    <property type="match status" value="1"/>
</dbReference>
<dbReference type="Gene3D" id="3.40.50.800">
    <property type="entry name" value="Anticodon-binding domain"/>
    <property type="match status" value="1"/>
</dbReference>
<dbReference type="Gene3D" id="3.30.930.10">
    <property type="entry name" value="Bira Bifunctional Protein, Domain 2"/>
    <property type="match status" value="1"/>
</dbReference>
<dbReference type="Gene3D" id="3.30.110.30">
    <property type="entry name" value="C-terminal domain of ProRS"/>
    <property type="match status" value="1"/>
</dbReference>
<dbReference type="HAMAP" id="MF_01571">
    <property type="entry name" value="Pro_tRNA_synth_type3"/>
    <property type="match status" value="1"/>
</dbReference>
<dbReference type="InterPro" id="IPR002314">
    <property type="entry name" value="aa-tRNA-synt_IIb"/>
</dbReference>
<dbReference type="InterPro" id="IPR006195">
    <property type="entry name" value="aa-tRNA-synth_II"/>
</dbReference>
<dbReference type="InterPro" id="IPR045864">
    <property type="entry name" value="aa-tRNA-synth_II/BPL/LPL"/>
</dbReference>
<dbReference type="InterPro" id="IPR004154">
    <property type="entry name" value="Anticodon-bd"/>
</dbReference>
<dbReference type="InterPro" id="IPR036621">
    <property type="entry name" value="Anticodon-bd_dom_sf"/>
</dbReference>
<dbReference type="InterPro" id="IPR002316">
    <property type="entry name" value="Pro-tRNA-ligase_IIa"/>
</dbReference>
<dbReference type="InterPro" id="IPR004499">
    <property type="entry name" value="Pro-tRNA-ligase_IIa_arc-type"/>
</dbReference>
<dbReference type="InterPro" id="IPR016061">
    <property type="entry name" value="Pro-tRNA_ligase_II_C"/>
</dbReference>
<dbReference type="InterPro" id="IPR017449">
    <property type="entry name" value="Pro-tRNA_synth_II"/>
</dbReference>
<dbReference type="InterPro" id="IPR033721">
    <property type="entry name" value="ProRS_core_arch_euk"/>
</dbReference>
<dbReference type="NCBIfam" id="TIGR00408">
    <property type="entry name" value="proS_fam_I"/>
    <property type="match status" value="1"/>
</dbReference>
<dbReference type="PANTHER" id="PTHR43382:SF2">
    <property type="entry name" value="BIFUNCTIONAL GLUTAMATE_PROLINE--TRNA LIGASE"/>
    <property type="match status" value="1"/>
</dbReference>
<dbReference type="PANTHER" id="PTHR43382">
    <property type="entry name" value="PROLYL-TRNA SYNTHETASE"/>
    <property type="match status" value="1"/>
</dbReference>
<dbReference type="Pfam" id="PF03129">
    <property type="entry name" value="HGTP_anticodon"/>
    <property type="match status" value="1"/>
</dbReference>
<dbReference type="Pfam" id="PF09180">
    <property type="entry name" value="ProRS-C_1"/>
    <property type="match status" value="1"/>
</dbReference>
<dbReference type="Pfam" id="PF00587">
    <property type="entry name" value="tRNA-synt_2b"/>
    <property type="match status" value="1"/>
</dbReference>
<dbReference type="PRINTS" id="PR01046">
    <property type="entry name" value="TRNASYNTHPRO"/>
</dbReference>
<dbReference type="SMART" id="SM00946">
    <property type="entry name" value="ProRS-C_1"/>
    <property type="match status" value="1"/>
</dbReference>
<dbReference type="SUPFAM" id="SSF64586">
    <property type="entry name" value="C-terminal domain of ProRS"/>
    <property type="match status" value="1"/>
</dbReference>
<dbReference type="SUPFAM" id="SSF52954">
    <property type="entry name" value="Class II aaRS ABD-related"/>
    <property type="match status" value="1"/>
</dbReference>
<dbReference type="SUPFAM" id="SSF55681">
    <property type="entry name" value="Class II aaRS and biotin synthetases"/>
    <property type="match status" value="1"/>
</dbReference>
<dbReference type="PROSITE" id="PS50862">
    <property type="entry name" value="AA_TRNA_LIGASE_II"/>
    <property type="match status" value="1"/>
</dbReference>
<sequence length="476" mass="54685">MAKEQVQAITKMEEDFAQWYTDIVKKAELVDYSSVKGCMILRPYGYALWENMQKVMDEKLKATSHENVYMPMFIPESLLQKEKDHVEGFAPEVAWVTHGGDEKLAERLCVRPTSETLFCEHFSKIVQSYNDLPKLYNQWCSVVRWEKTTRPFLRTTEFLWQEGHTIHETAEESQAETLNILNLYASFCEDYLAIPVIKGQKTEKEKFAGAKATYTIESLMHDGKALQTGTSHNFGTNFSEAFDIKFLDRNGKWQYVHQTSWGVSTRMIGGLIMVHSDNNGLVMPPKVAPVQVVIVPIAQHKEGVLAKATELQGHIQKVARVKIDASNKTPGWKFNEYEMKGIPIRLEVGPKDIEKNQVVLVRRDTKEKEFISMDQLEERIPALLEEIHNSLFNKAKVFRDENTYSVTSFEEMKKVADEKQGFIKAMWCGELACEEKLKEEVGVSSRCMPFEQEHLAEECVCCGKEAKQMVYWGKAY</sequence>
<keyword id="KW-0030">Aminoacyl-tRNA synthetase</keyword>
<keyword id="KW-0067">ATP-binding</keyword>
<keyword id="KW-0963">Cytoplasm</keyword>
<keyword id="KW-0436">Ligase</keyword>
<keyword id="KW-0547">Nucleotide-binding</keyword>
<keyword id="KW-0648">Protein biosynthesis</keyword>
<gene>
    <name evidence="1" type="primary">proS2</name>
    <name type="ordered locus">BALH_0396</name>
</gene>
<comment type="function">
    <text evidence="1">Catalyzes the attachment of proline to tRNA(Pro) in a two-step reaction: proline is first activated by ATP to form Pro-AMP and then transferred to the acceptor end of tRNA(Pro).</text>
</comment>
<comment type="catalytic activity">
    <reaction evidence="1">
        <text>tRNA(Pro) + L-proline + ATP = L-prolyl-tRNA(Pro) + AMP + diphosphate</text>
        <dbReference type="Rhea" id="RHEA:14305"/>
        <dbReference type="Rhea" id="RHEA-COMP:9700"/>
        <dbReference type="Rhea" id="RHEA-COMP:9702"/>
        <dbReference type="ChEBI" id="CHEBI:30616"/>
        <dbReference type="ChEBI" id="CHEBI:33019"/>
        <dbReference type="ChEBI" id="CHEBI:60039"/>
        <dbReference type="ChEBI" id="CHEBI:78442"/>
        <dbReference type="ChEBI" id="CHEBI:78532"/>
        <dbReference type="ChEBI" id="CHEBI:456215"/>
        <dbReference type="EC" id="6.1.1.15"/>
    </reaction>
</comment>
<comment type="subunit">
    <text evidence="1">Homodimer.</text>
</comment>
<comment type="subcellular location">
    <subcellularLocation>
        <location evidence="1">Cytoplasm</location>
    </subcellularLocation>
</comment>
<comment type="domain">
    <text evidence="1">Consists of three domains: the N-terminal catalytic domain, the anticodon-binding domain and the C-terminal extension.</text>
</comment>
<comment type="similarity">
    <text evidence="1">Belongs to the class-II aminoacyl-tRNA synthetase family. ProS type 3 subfamily.</text>
</comment>
<comment type="sequence caution" evidence="2">
    <conflict type="erroneous initiation">
        <sequence resource="EMBL-CDS" id="ABK83793"/>
    </conflict>
</comment>
<feature type="chain" id="PRO_0000288403" description="Proline--tRNA ligase 2">
    <location>
        <begin position="1"/>
        <end position="476"/>
    </location>
</feature>
<accession>A0R9A0</accession>
<evidence type="ECO:0000255" key="1">
    <source>
        <dbReference type="HAMAP-Rule" id="MF_01571"/>
    </source>
</evidence>
<evidence type="ECO:0000305" key="2"/>
<reference key="1">
    <citation type="journal article" date="2007" name="J. Bacteriol.">
        <title>The complete genome sequence of Bacillus thuringiensis Al Hakam.</title>
        <authorList>
            <person name="Challacombe J.F."/>
            <person name="Altherr M.R."/>
            <person name="Xie G."/>
            <person name="Bhotika S.S."/>
            <person name="Brown N."/>
            <person name="Bruce D."/>
            <person name="Campbell C.S."/>
            <person name="Campbell M.L."/>
            <person name="Chen J."/>
            <person name="Chertkov O."/>
            <person name="Cleland C."/>
            <person name="Dimitrijevic M."/>
            <person name="Doggett N.A."/>
            <person name="Fawcett J.J."/>
            <person name="Glavina T."/>
            <person name="Goodwin L.A."/>
            <person name="Green L.D."/>
            <person name="Han C.S."/>
            <person name="Hill K.K."/>
            <person name="Hitchcock P."/>
            <person name="Jackson P.J."/>
            <person name="Keim P."/>
            <person name="Kewalramani A.R."/>
            <person name="Longmire J."/>
            <person name="Lucas S."/>
            <person name="Malfatti S."/>
            <person name="Martinez D."/>
            <person name="McMurry K."/>
            <person name="Meincke L.J."/>
            <person name="Misra M."/>
            <person name="Moseman B.L."/>
            <person name="Mundt M."/>
            <person name="Munk A.C."/>
            <person name="Okinaka R.T."/>
            <person name="Parson-Quintana B."/>
            <person name="Reilly L.P."/>
            <person name="Richardson P."/>
            <person name="Robinson D.L."/>
            <person name="Saunders E."/>
            <person name="Tapia R."/>
            <person name="Tesmer J.G."/>
            <person name="Thayer N."/>
            <person name="Thompson L.S."/>
            <person name="Tice H."/>
            <person name="Ticknor L.O."/>
            <person name="Wills P.L."/>
            <person name="Gilna P."/>
            <person name="Brettin T.S."/>
        </authorList>
    </citation>
    <scope>NUCLEOTIDE SEQUENCE [LARGE SCALE GENOMIC DNA]</scope>
    <source>
        <strain>Al Hakam</strain>
    </source>
</reference>
<name>SYP2_BACAH</name>
<proteinExistence type="inferred from homology"/>